<evidence type="ECO:0000305" key="1"/>
<name>SIG1S_REOVL</name>
<reference key="1">
    <citation type="journal article" date="1985" name="Proc. Natl. Acad. Sci. U.S.A.">
        <title>Sequences of the S1 genes of the three serotypes of reovirus.</title>
        <authorList>
            <person name="Cashdollar L.W."/>
            <person name="Chmelo R.A."/>
            <person name="Wiener J.R."/>
            <person name="Joklik W.K."/>
        </authorList>
    </citation>
    <scope>NUCLEOTIDE SEQUENCE [GENOMIC RNA]</scope>
</reference>
<reference key="2">
    <citation type="journal article" date="1986" name="Biochem. Biophys. Res. Commun.">
        <title>Biosynthesis of reovirus-specified polypeptides. Molecular cDNA cloning and nucleotide sequence of the reovirus serotype 1 Lang strain bicistronic s1 mRNA which encodes the minor capsid polypeptide sigma 1a and the nonstructural polypeptide sigma 1bNS.</title>
        <authorList>
            <person name="Munemitsu S.M."/>
            <person name="Atwater J.A."/>
            <person name="Samuel C.E."/>
        </authorList>
    </citation>
    <scope>NUCLEOTIDE SEQUENCE [GENOMIC RNA]</scope>
</reference>
<reference key="3">
    <citation type="journal article" date="1990" name="J. Virol.">
        <title>Structure of the reovirus cell-attachment protein: a model for the domain organization of sigma 1.</title>
        <authorList>
            <person name="Nibert M.L."/>
            <person name="Dermody T.S."/>
            <person name="Fields B.N."/>
        </authorList>
    </citation>
    <scope>NUCLEOTIDE SEQUENCE [GENOMIC RNA]</scope>
</reference>
<comment type="similarity">
    <text evidence="1">Belongs to the orthoreovirus sigma-1s protein family.</text>
</comment>
<gene>
    <name type="primary">S1</name>
</gene>
<protein>
    <recommendedName>
        <fullName>Protein sigma-1-small</fullName>
        <shortName>Sigma1s</shortName>
    </recommendedName>
    <alternativeName>
        <fullName>Sigma-s</fullName>
    </alternativeName>
    <alternativeName>
        <fullName>Sigma1NS</fullName>
    </alternativeName>
    <alternativeName>
        <fullName>Sigma1bNS</fullName>
    </alternativeName>
    <alternativeName>
        <fullName>p14</fullName>
    </alternativeName>
</protein>
<accession>P07938</accession>
<keyword id="KW-1079">Host G2/M cell cycle arrest by virus</keyword>
<keyword id="KW-0945">Host-virus interaction</keyword>
<keyword id="KW-1121">Modulation of host cell cycle by virus</keyword>
<keyword id="KW-1185">Reference proteome</keyword>
<organismHost>
    <name type="scientific">Mammalia</name>
    <dbReference type="NCBI Taxonomy" id="40674"/>
</organismHost>
<sequence length="119" mass="13989">MAPSQKKSRKSRNKSRSTLMISGLPILNSTDLEDRLLTSAIASQPLSQDWVRWIIDLWVSRVRSRNYLTQVARTLRAYPHWVTESMLSNHELTVWIRSRLISLDEHPLWRQMLEAYGQN</sequence>
<organism>
    <name type="scientific">Reovirus type 1 (strain Lang)</name>
    <name type="common">T1L</name>
    <name type="synonym">Mammalian orthoreovirus 1</name>
    <dbReference type="NCBI Taxonomy" id="10884"/>
    <lineage>
        <taxon>Viruses</taxon>
        <taxon>Riboviria</taxon>
        <taxon>Orthornavirae</taxon>
        <taxon>Duplornaviricota</taxon>
        <taxon>Resentoviricetes</taxon>
        <taxon>Reovirales</taxon>
        <taxon>Spinareoviridae</taxon>
        <taxon>Orthoreovirus</taxon>
        <taxon>Mammalian orthoreovirus</taxon>
    </lineage>
</organism>
<feature type="chain" id="PRO_0000222757" description="Protein sigma-1-small">
    <location>
        <begin position="1"/>
        <end position="119"/>
    </location>
</feature>
<feature type="sequence conflict" description="In Ref. 2; AAA47243." evidence="1" ref="2">
    <original>V</original>
    <variation>L</variation>
    <location>
        <position position="71"/>
    </location>
</feature>
<proteinExistence type="inferred from homology"/>
<dbReference type="EMBL" id="M10260">
    <property type="protein sequence ID" value="AAA66878.1"/>
    <property type="molecule type" value="Genomic_RNA"/>
</dbReference>
<dbReference type="EMBL" id="M14779">
    <property type="protein sequence ID" value="AAA47277.1"/>
    <property type="molecule type" value="Genomic_RNA"/>
</dbReference>
<dbReference type="EMBL" id="M35963">
    <property type="protein sequence ID" value="AAA47243.1"/>
    <property type="molecule type" value="Genomic_RNA"/>
</dbReference>
<dbReference type="PIR" id="B26436">
    <property type="entry name" value="MNXR1B"/>
</dbReference>
<dbReference type="PIR" id="B34829">
    <property type="entry name" value="B34829"/>
</dbReference>
<dbReference type="SMR" id="P07938"/>
<dbReference type="Proteomes" id="UP000007253">
    <property type="component" value="Genome"/>
</dbReference>
<dbReference type="GO" id="GO:0039592">
    <property type="term" value="P:symbiont-mediated arrest of host cell cycle during G2/M transition"/>
    <property type="evidence" value="ECO:0007669"/>
    <property type="project" value="UniProtKB-KW"/>
</dbReference>
<dbReference type="InterPro" id="IPR003478">
    <property type="entry name" value="Capsid_sigma_1s"/>
</dbReference>
<dbReference type="Pfam" id="PF02454">
    <property type="entry name" value="Sigma_1s"/>
    <property type="match status" value="1"/>
</dbReference>